<comment type="function">
    <text evidence="1">RNA-binding protein involved in the correct localization of transcripts in the cell. RNA localization is a widespread mechanism for achieving localized protein synthesis. Involved in structural and functional organization of telomeric chromatin and regulates silencing at the HMR locus (By similarity).</text>
</comment>
<comment type="subunit">
    <text evidence="1">Binds RNA.</text>
</comment>
<comment type="subcellular location">
    <subcellularLocation>
        <location evidence="1">Cytoplasm</location>
    </subcellularLocation>
    <subcellularLocation>
        <location evidence="1">Cytoplasm</location>
        <location evidence="1">P-body</location>
    </subcellularLocation>
    <subcellularLocation>
        <location evidence="1">Nucleus</location>
    </subcellularLocation>
    <subcellularLocation>
        <location evidence="1">Chromosome</location>
        <location evidence="1">Telomere</location>
    </subcellularLocation>
</comment>
<comment type="similarity">
    <text evidence="3">Belongs to the HEK2 family.</text>
</comment>
<name>HEK2_LACTC</name>
<keyword id="KW-0156">Chromatin regulator</keyword>
<keyword id="KW-0158">Chromosome</keyword>
<keyword id="KW-0963">Cytoplasm</keyword>
<keyword id="KW-0509">mRNA transport</keyword>
<keyword id="KW-0539">Nucleus</keyword>
<keyword id="KW-1185">Reference proteome</keyword>
<keyword id="KW-0677">Repeat</keyword>
<keyword id="KW-0694">RNA-binding</keyword>
<keyword id="KW-0779">Telomere</keyword>
<keyword id="KW-0810">Translation regulation</keyword>
<keyword id="KW-0813">Transport</keyword>
<organism>
    <name type="scientific">Lachancea thermotolerans (strain ATCC 56472 / CBS 6340 / NRRL Y-8284)</name>
    <name type="common">Yeast</name>
    <name type="synonym">Kluyveromyces thermotolerans</name>
    <dbReference type="NCBI Taxonomy" id="559295"/>
    <lineage>
        <taxon>Eukaryota</taxon>
        <taxon>Fungi</taxon>
        <taxon>Dikarya</taxon>
        <taxon>Ascomycota</taxon>
        <taxon>Saccharomycotina</taxon>
        <taxon>Saccharomycetes</taxon>
        <taxon>Saccharomycetales</taxon>
        <taxon>Saccharomycetaceae</taxon>
        <taxon>Lachancea</taxon>
    </lineage>
</organism>
<sequence length="285" mass="31158">MAEVEHQDTVNHRVLVSLKEAARIIGAQGMTIQKIRESSKVKIGISPHERGCSDRILSCSGSAQGVANAIGDVVEVLNQDDSEPETHSYKPLNFILPAPSATEIQDPESVKRIGNLRLIVSNSQVSSIIGTQGSRIKSLIEKHGVKVVASKNFLPDSQDRVVEIQGFPGAIASCLVDISEILAAEPKPSHEKQYYPHTKSQEEGSVTKDVAIPVEYVGALLGRGGNRVSSLRKYTKTKVIVSDEPDEENNRVFTITGNNQNSVKLAETMLLKNLETEKQRREDKV</sequence>
<protein>
    <recommendedName>
        <fullName>Heterogeneous nuclear rnp K-like protein 2</fullName>
    </recommendedName>
    <alternativeName>
        <fullName>KH domain-containing protein 1</fullName>
    </alternativeName>
</protein>
<gene>
    <name type="primary">HEK2</name>
    <name type="synonym">KHD1</name>
    <name type="ordered locus">KLTH0E14520g</name>
</gene>
<feature type="chain" id="PRO_0000408190" description="Heterogeneous nuclear rnp K-like protein 2">
    <location>
        <begin position="1"/>
        <end position="285"/>
    </location>
</feature>
<feature type="domain" description="KH 1" evidence="2">
    <location>
        <begin position="9"/>
        <end position="73"/>
    </location>
</feature>
<feature type="domain" description="KH 2" evidence="2">
    <location>
        <begin position="113"/>
        <end position="178"/>
    </location>
</feature>
<feature type="domain" description="KH 3" evidence="2">
    <location>
        <begin position="205"/>
        <end position="270"/>
    </location>
</feature>
<dbReference type="EMBL" id="CU928169">
    <property type="protein sequence ID" value="CAR23673.1"/>
    <property type="molecule type" value="Genomic_DNA"/>
</dbReference>
<dbReference type="RefSeq" id="XP_002554110.1">
    <property type="nucleotide sequence ID" value="XM_002554064.1"/>
</dbReference>
<dbReference type="SMR" id="C5DIR2"/>
<dbReference type="FunCoup" id="C5DIR2">
    <property type="interactions" value="276"/>
</dbReference>
<dbReference type="STRING" id="559295.C5DIR2"/>
<dbReference type="GeneID" id="8292280"/>
<dbReference type="KEGG" id="lth:KLTH0E14520g"/>
<dbReference type="eggNOG" id="KOG2190">
    <property type="taxonomic scope" value="Eukaryota"/>
</dbReference>
<dbReference type="HOGENOM" id="CLU_022670_2_0_1"/>
<dbReference type="InParanoid" id="C5DIR2"/>
<dbReference type="OMA" id="SIAKEPH"/>
<dbReference type="OrthoDB" id="442947at2759"/>
<dbReference type="Proteomes" id="UP000002036">
    <property type="component" value="Chromosome E"/>
</dbReference>
<dbReference type="GO" id="GO:0000781">
    <property type="term" value="C:chromosome, telomeric region"/>
    <property type="evidence" value="ECO:0007669"/>
    <property type="project" value="UniProtKB-SubCell"/>
</dbReference>
<dbReference type="GO" id="GO:0005634">
    <property type="term" value="C:nucleus"/>
    <property type="evidence" value="ECO:0007669"/>
    <property type="project" value="UniProtKB-SubCell"/>
</dbReference>
<dbReference type="GO" id="GO:0000932">
    <property type="term" value="C:P-body"/>
    <property type="evidence" value="ECO:0007669"/>
    <property type="project" value="UniProtKB-SubCell"/>
</dbReference>
<dbReference type="GO" id="GO:0003723">
    <property type="term" value="F:RNA binding"/>
    <property type="evidence" value="ECO:0007669"/>
    <property type="project" value="UniProtKB-KW"/>
</dbReference>
<dbReference type="GO" id="GO:0006325">
    <property type="term" value="P:chromatin organization"/>
    <property type="evidence" value="ECO:0007669"/>
    <property type="project" value="UniProtKB-KW"/>
</dbReference>
<dbReference type="GO" id="GO:0051028">
    <property type="term" value="P:mRNA transport"/>
    <property type="evidence" value="ECO:0007669"/>
    <property type="project" value="UniProtKB-KW"/>
</dbReference>
<dbReference type="GO" id="GO:0006417">
    <property type="term" value="P:regulation of translation"/>
    <property type="evidence" value="ECO:0007669"/>
    <property type="project" value="UniProtKB-KW"/>
</dbReference>
<dbReference type="CDD" id="cd00105">
    <property type="entry name" value="KH-I"/>
    <property type="match status" value="1"/>
</dbReference>
<dbReference type="Gene3D" id="3.30.1370.10">
    <property type="entry name" value="K Homology domain, type 1"/>
    <property type="match status" value="3"/>
</dbReference>
<dbReference type="InterPro" id="IPR004087">
    <property type="entry name" value="KH_dom"/>
</dbReference>
<dbReference type="InterPro" id="IPR004088">
    <property type="entry name" value="KH_dom_type_1"/>
</dbReference>
<dbReference type="InterPro" id="IPR036612">
    <property type="entry name" value="KH_dom_type_1_sf"/>
</dbReference>
<dbReference type="PANTHER" id="PTHR10288">
    <property type="entry name" value="KH DOMAIN CONTAINING RNA BINDING PROTEIN"/>
    <property type="match status" value="1"/>
</dbReference>
<dbReference type="Pfam" id="PF00013">
    <property type="entry name" value="KH_1"/>
    <property type="match status" value="3"/>
</dbReference>
<dbReference type="SMART" id="SM00322">
    <property type="entry name" value="KH"/>
    <property type="match status" value="3"/>
</dbReference>
<dbReference type="SUPFAM" id="SSF54791">
    <property type="entry name" value="Eukaryotic type KH-domain (KH-domain type I)"/>
    <property type="match status" value="3"/>
</dbReference>
<dbReference type="PROSITE" id="PS50084">
    <property type="entry name" value="KH_TYPE_1"/>
    <property type="match status" value="3"/>
</dbReference>
<reference key="1">
    <citation type="journal article" date="2009" name="Genome Res.">
        <title>Comparative genomics of protoploid Saccharomycetaceae.</title>
        <authorList>
            <consortium name="The Genolevures Consortium"/>
            <person name="Souciet J.-L."/>
            <person name="Dujon B."/>
            <person name="Gaillardin C."/>
            <person name="Johnston M."/>
            <person name="Baret P.V."/>
            <person name="Cliften P."/>
            <person name="Sherman D.J."/>
            <person name="Weissenbach J."/>
            <person name="Westhof E."/>
            <person name="Wincker P."/>
            <person name="Jubin C."/>
            <person name="Poulain J."/>
            <person name="Barbe V."/>
            <person name="Segurens B."/>
            <person name="Artiguenave F."/>
            <person name="Anthouard V."/>
            <person name="Vacherie B."/>
            <person name="Val M.-E."/>
            <person name="Fulton R.S."/>
            <person name="Minx P."/>
            <person name="Wilson R."/>
            <person name="Durrens P."/>
            <person name="Jean G."/>
            <person name="Marck C."/>
            <person name="Martin T."/>
            <person name="Nikolski M."/>
            <person name="Rolland T."/>
            <person name="Seret M.-L."/>
            <person name="Casaregola S."/>
            <person name="Despons L."/>
            <person name="Fairhead C."/>
            <person name="Fischer G."/>
            <person name="Lafontaine I."/>
            <person name="Leh V."/>
            <person name="Lemaire M."/>
            <person name="de Montigny J."/>
            <person name="Neuveglise C."/>
            <person name="Thierry A."/>
            <person name="Blanc-Lenfle I."/>
            <person name="Bleykasten C."/>
            <person name="Diffels J."/>
            <person name="Fritsch E."/>
            <person name="Frangeul L."/>
            <person name="Goeffon A."/>
            <person name="Jauniaux N."/>
            <person name="Kachouri-Lafond R."/>
            <person name="Payen C."/>
            <person name="Potier S."/>
            <person name="Pribylova L."/>
            <person name="Ozanne C."/>
            <person name="Richard G.-F."/>
            <person name="Sacerdot C."/>
            <person name="Straub M.-L."/>
            <person name="Talla E."/>
        </authorList>
    </citation>
    <scope>NUCLEOTIDE SEQUENCE [LARGE SCALE GENOMIC DNA]</scope>
    <source>
        <strain>ATCC 56472 / CBS 6340 / NRRL Y-8284</strain>
    </source>
</reference>
<evidence type="ECO:0000250" key="1"/>
<evidence type="ECO:0000255" key="2">
    <source>
        <dbReference type="PROSITE-ProRule" id="PRU00117"/>
    </source>
</evidence>
<evidence type="ECO:0000305" key="3"/>
<proteinExistence type="inferred from homology"/>
<accession>C5DIR2</accession>